<name>PAPG2_ECOL6</name>
<gene>
    <name evidence="6" type="primary">papGII</name>
    <name type="ordered locus">c3583</name>
</gene>
<sequence length="336" mass="37548">MKKWFPALLFSLCVSGESSAWNNIVFYSLGNVNSYQGGNVVITQRPQFITSWRPGIATVTWNQCNGPEFADGSWAYYREYIAWVVFPKKVMTKNGYPLFIEVHNKGSWSEENTGDNDSYFFLKGYKWDERAFDAGNLCQKPGETTRLTEKFNDIIFKVALPADLPLGDYSVTIPYTSGIQRHFASYLGARFKIPYNVAKTLPRENEMLFLFKNIGGCRPSAQSLEIKHGDLSINSANNHYAAQTLSVSCDVPANIRFMLLRNTTPTYSHGKKFSVGLGHGWDSIVSVNGVDTGETTMRWYKAGTQNLTIGSRLYGESSKIQPGVLSGSATLLMILP</sequence>
<organism>
    <name type="scientific">Escherichia coli O6:H1 (strain CFT073 / ATCC 700928 / UPEC)</name>
    <dbReference type="NCBI Taxonomy" id="199310"/>
    <lineage>
        <taxon>Bacteria</taxon>
        <taxon>Pseudomonadati</taxon>
        <taxon>Pseudomonadota</taxon>
        <taxon>Gammaproteobacteria</taxon>
        <taxon>Enterobacterales</taxon>
        <taxon>Enterobacteriaceae</taxon>
        <taxon>Escherichia</taxon>
    </lineage>
</organism>
<proteinExistence type="inferred from homology"/>
<evidence type="ECO:0000250" key="1">
    <source>
        <dbReference type="UniProtKB" id="P13720"/>
    </source>
</evidence>
<evidence type="ECO:0000250" key="2">
    <source>
        <dbReference type="UniProtKB" id="Q47450"/>
    </source>
</evidence>
<evidence type="ECO:0000255" key="3"/>
<evidence type="ECO:0000269" key="4">
    <source>
    </source>
</evidence>
<evidence type="ECO:0000269" key="5">
    <source>
    </source>
</evidence>
<evidence type="ECO:0000303" key="6">
    <source>
    </source>
</evidence>
<evidence type="ECO:0000305" key="7"/>
<reference key="1">
    <citation type="journal article" date="2002" name="Proc. Natl. Acad. Sci. U.S.A.">
        <title>Extensive mosaic structure revealed by the complete genome sequence of uropathogenic Escherichia coli.</title>
        <authorList>
            <person name="Welch R.A."/>
            <person name="Burland V."/>
            <person name="Plunkett G. III"/>
            <person name="Redford P."/>
            <person name="Roesch P."/>
            <person name="Rasko D."/>
            <person name="Buckles E.L."/>
            <person name="Liou S.-R."/>
            <person name="Boutin A."/>
            <person name="Hackett J."/>
            <person name="Stroud D."/>
            <person name="Mayhew G.F."/>
            <person name="Rose D.J."/>
            <person name="Zhou S."/>
            <person name="Schwartz D.C."/>
            <person name="Perna N.T."/>
            <person name="Mobley H.L.T."/>
            <person name="Donnenberg M.S."/>
            <person name="Blattner F.R."/>
        </authorList>
    </citation>
    <scope>NUCLEOTIDE SEQUENCE [LARGE SCALE GENOMIC DNA]</scope>
    <source>
        <strain>CFT073 / ATCC 700928 / UPEC</strain>
    </source>
</reference>
<reference key="2">
    <citation type="journal article" date="2019" name="PLoS Pathog.">
        <title>Fimbriae reprogram host gene expression - Divergent effects of P and type 1 fimbriae.</title>
        <authorList>
            <person name="Ambite I."/>
            <person name="Butler D.S.C."/>
            <person name="Stork C."/>
            <person name="Groenberg-Hernandez J."/>
            <person name="Koeves B."/>
            <person name="Zdziarski J."/>
            <person name="Pinkner J."/>
            <person name="Hultgren S.J."/>
            <person name="Dobrindt U."/>
            <person name="Wullt B."/>
            <person name="Svanborg C."/>
        </authorList>
    </citation>
    <scope>FUNCTION</scope>
    <source>
        <strain>CFT073 / ATCC 700928 / UPEC</strain>
    </source>
</reference>
<reference key="3">
    <citation type="journal article" date="2020" name="Nat. Commun.">
        <title>Horizontally acquired papGII-containing pathogenicity islands underlie the emergence of invasive uropathogenic Escherichia coli lineages.</title>
        <authorList>
            <person name="Biggel M."/>
            <person name="Xavier B.B."/>
            <person name="Johnson J.R."/>
            <person name="Nielsen K.L."/>
            <person name="Frimodt-Moeller N."/>
            <person name="Matheeussen V."/>
            <person name="Goossens H."/>
            <person name="Moons P."/>
            <person name="Van Puyvelde S."/>
        </authorList>
    </citation>
    <scope>FUNCTION</scope>
    <source>
        <strain>CFT073 / ATCC 700928 / UPEC</strain>
    </source>
</reference>
<keyword id="KW-1015">Disulfide bond</keyword>
<keyword id="KW-0281">Fimbrium</keyword>
<keyword id="KW-1185">Reference proteome</keyword>
<keyword id="KW-0964">Secreted</keyword>
<keyword id="KW-0732">Signal</keyword>
<protein>
    <recommendedName>
        <fullName evidence="6">Fimbrial adhesin PapGII</fullName>
    </recommendedName>
</protein>
<dbReference type="EMBL" id="AE014075">
    <property type="protein sequence ID" value="AAN82031.1"/>
    <property type="molecule type" value="Genomic_DNA"/>
</dbReference>
<dbReference type="RefSeq" id="WP_000758683.1">
    <property type="nucleotide sequence ID" value="NC_004431.1"/>
</dbReference>
<dbReference type="SMR" id="A0A0H2VAQ6"/>
<dbReference type="STRING" id="199310.c3583"/>
<dbReference type="KEGG" id="ecc:c3583"/>
<dbReference type="HOGENOM" id="CLU_071256_0_0_6"/>
<dbReference type="Proteomes" id="UP000001410">
    <property type="component" value="Chromosome"/>
</dbReference>
<dbReference type="GO" id="GO:0005576">
    <property type="term" value="C:extracellular region"/>
    <property type="evidence" value="ECO:0007669"/>
    <property type="project" value="UniProtKB-SubCell"/>
</dbReference>
<dbReference type="GO" id="GO:0009289">
    <property type="term" value="C:pilus"/>
    <property type="evidence" value="ECO:0007669"/>
    <property type="project" value="UniProtKB-SubCell"/>
</dbReference>
<dbReference type="GO" id="GO:0030246">
    <property type="term" value="F:carbohydrate binding"/>
    <property type="evidence" value="ECO:0007669"/>
    <property type="project" value="InterPro"/>
</dbReference>
<dbReference type="GO" id="GO:0007155">
    <property type="term" value="P:cell adhesion"/>
    <property type="evidence" value="ECO:0007669"/>
    <property type="project" value="InterPro"/>
</dbReference>
<dbReference type="CDD" id="cd00239">
    <property type="entry name" value="PapG_CBD"/>
    <property type="match status" value="1"/>
</dbReference>
<dbReference type="Gene3D" id="2.60.40.1370">
    <property type="entry name" value="Bacterial adhesin receptor binding domain"/>
    <property type="match status" value="1"/>
</dbReference>
<dbReference type="Gene3D" id="2.60.40.1090">
    <property type="entry name" value="Fimbrial-type adhesion domain"/>
    <property type="match status" value="1"/>
</dbReference>
<dbReference type="InterPro" id="IPR036937">
    <property type="entry name" value="Adhesion_dom_fimbrial_sf"/>
</dbReference>
<dbReference type="InterPro" id="IPR008966">
    <property type="entry name" value="Adhesion_dom_sf"/>
</dbReference>
<dbReference type="InterPro" id="IPR005310">
    <property type="entry name" value="PapG_carb-bd_N"/>
</dbReference>
<dbReference type="InterPro" id="IPR038420">
    <property type="entry name" value="PapG_carbohydrate-bd_sf"/>
</dbReference>
<dbReference type="InterPro" id="IPR005309">
    <property type="entry name" value="PapG_chaper-bd_C"/>
</dbReference>
<dbReference type="Pfam" id="PF03628">
    <property type="entry name" value="PapG_C"/>
    <property type="match status" value="1"/>
</dbReference>
<dbReference type="Pfam" id="PF03627">
    <property type="entry name" value="PapG_N"/>
    <property type="match status" value="1"/>
</dbReference>
<dbReference type="SUPFAM" id="SSF49401">
    <property type="entry name" value="Bacterial adhesins"/>
    <property type="match status" value="1"/>
</dbReference>
<feature type="signal peptide" evidence="3">
    <location>
        <begin position="1"/>
        <end position="20"/>
    </location>
</feature>
<feature type="chain" id="PRO_0000452587" description="Fimbrial adhesin PapGII" evidence="3">
    <location>
        <begin position="21"/>
        <end position="336"/>
    </location>
</feature>
<feature type="binding site" evidence="2">
    <location>
        <position position="79"/>
    </location>
    <ligand>
        <name>D-galactose</name>
        <dbReference type="ChEBI" id="CHEBI:4139"/>
    </ligand>
</feature>
<feature type="binding site" evidence="2">
    <location>
        <begin position="124"/>
        <end position="127"/>
    </location>
    <ligand>
        <name>D-galactose</name>
        <dbReference type="ChEBI" id="CHEBI:4139"/>
    </ligand>
</feature>
<feature type="disulfide bond" evidence="2">
    <location>
        <begin position="64"/>
        <end position="138"/>
    </location>
</feature>
<feature type="disulfide bond" evidence="2">
    <location>
        <begin position="217"/>
        <end position="249"/>
    </location>
</feature>
<accession>A0A0H2VAQ6</accession>
<comment type="function">
    <text evidence="4 5">Tip adhesin component of type P pili that plays a critical role in kidney infection through targeted interaction with the globoseries glycolipids containing the Gal-alpha(1-4)-Gal disaccharide present on uroepithelial cells. In turn, transcriptionally regulates host gene expression in kidney cells, leading to inflammatory pathway activation and renal tissue damage (PubMed:31181116). Acts thereby as key determinant of invasive uropathogenic E.coli (UPEC), which cause pyelonephritis and urinary-source bacteremia (PubMed:33235212).</text>
</comment>
<comment type="subcellular location">
    <subcellularLocation>
        <location evidence="1">Secreted</location>
    </subcellularLocation>
    <subcellularLocation>
        <location evidence="1">Fimbrium</location>
    </subcellularLocation>
    <text evidence="1">At the tip of P pili.</text>
</comment>
<comment type="miscellaneous">
    <text>Strains of E.coli that cause infection of the human urinary tract produce pap-pili (P pili) which are hair-like appendages consisting of about 1000 helically arranged subunits of the protein PapA. These pili mediate binding to digalactoside-containing glycolipids present on the epithelial cells which line the urinary tract.</text>
</comment>
<comment type="similarity">
    <text evidence="7">Belongs to the adhesin PapG family.</text>
</comment>